<sequence>MAIVGTIIKIIKAIIDIFAK</sequence>
<accession>P0C818</accession>
<reference key="1">
    <citation type="book" date="2006" name="Gram positive pathogens, 2nd edition">
        <title>The Staphylococcus aureus NCTC 8325 genome.</title>
        <editorList>
            <person name="Fischetti V."/>
            <person name="Novick R."/>
            <person name="Ferretti J."/>
            <person name="Portnoy D."/>
            <person name="Rood J."/>
        </editorList>
        <authorList>
            <person name="Gillaspy A.F."/>
            <person name="Worrell V."/>
            <person name="Orvis J."/>
            <person name="Roe B.A."/>
            <person name="Dyer D.W."/>
            <person name="Iandolo J.J."/>
        </authorList>
    </citation>
    <scope>NUCLEOTIDE SEQUENCE [LARGE SCALE GENOMIC DNA]</scope>
    <source>
        <strain>NCTC 8325 / PS 47</strain>
    </source>
</reference>
<protein>
    <recommendedName>
        <fullName>Phenol-soluble modulin alpha 4 peptide</fullName>
    </recommendedName>
</protein>
<dbReference type="EMBL" id="CP000253">
    <property type="status" value="NOT_ANNOTATED_CDS"/>
    <property type="molecule type" value="Genomic_DNA"/>
</dbReference>
<dbReference type="SMR" id="P0C818"/>
<dbReference type="Proteomes" id="UP000008816">
    <property type="component" value="Chromosome"/>
</dbReference>
<dbReference type="GO" id="GO:0031640">
    <property type="term" value="P:killing of cells of another organism"/>
    <property type="evidence" value="ECO:0007669"/>
    <property type="project" value="UniProtKB-KW"/>
</dbReference>
<dbReference type="InterPro" id="IPR031429">
    <property type="entry name" value="PSM_alpha"/>
</dbReference>
<dbReference type="Pfam" id="PF17063">
    <property type="entry name" value="PSMalpha"/>
    <property type="match status" value="1"/>
</dbReference>
<keyword id="KW-0204">Cytolysis</keyword>
<keyword id="KW-1185">Reference proteome</keyword>
<keyword id="KW-0843">Virulence</keyword>
<feature type="peptide" id="PRO_0000345074" description="Phenol-soluble modulin alpha 4 peptide">
    <location>
        <begin position="1"/>
        <end position="20"/>
    </location>
</feature>
<organism>
    <name type="scientific">Staphylococcus aureus (strain NCTC 8325 / PS 47)</name>
    <dbReference type="NCBI Taxonomy" id="93061"/>
    <lineage>
        <taxon>Bacteria</taxon>
        <taxon>Bacillati</taxon>
        <taxon>Bacillota</taxon>
        <taxon>Bacilli</taxon>
        <taxon>Bacillales</taxon>
        <taxon>Staphylococcaceae</taxon>
        <taxon>Staphylococcus</taxon>
    </lineage>
</organism>
<comment type="function">
    <text evidence="1">Peptide which can recruit, activate and subsequently lyse human neutrophils, thus eliminating the main cellular defense against infection.</text>
</comment>
<comment type="similarity">
    <text evidence="2">Belongs to the phenol-soluble modulin alpha peptides family.</text>
</comment>
<name>PSMA4_STAA8</name>
<proteinExistence type="inferred from homology"/>
<evidence type="ECO:0000250" key="1">
    <source>
        <dbReference type="UniProtKB" id="A9JX08"/>
    </source>
</evidence>
<evidence type="ECO:0000305" key="2"/>
<gene>
    <name type="primary">psmA4</name>
    <name type="ordered locus">SAOUHSC_00411.1</name>
</gene>